<dbReference type="EMBL" id="EU431223">
    <property type="protein sequence ID" value="ABY86778.1"/>
    <property type="molecule type" value="Genomic_DNA"/>
</dbReference>
<dbReference type="RefSeq" id="YP_001671679.2">
    <property type="nucleotide sequence ID" value="NC_010323.1"/>
</dbReference>
<dbReference type="SMR" id="B1A931"/>
<dbReference type="GeneID" id="5878353"/>
<dbReference type="KEGG" id="cpap:5878353"/>
<dbReference type="OrthoDB" id="1854980at2759"/>
<dbReference type="GO" id="GO:0009535">
    <property type="term" value="C:chloroplast thylakoid membrane"/>
    <property type="evidence" value="ECO:0007669"/>
    <property type="project" value="UniProtKB-SubCell"/>
</dbReference>
<dbReference type="GO" id="GO:0009523">
    <property type="term" value="C:photosystem II"/>
    <property type="evidence" value="ECO:0007669"/>
    <property type="project" value="UniProtKB-KW"/>
</dbReference>
<dbReference type="GO" id="GO:0016168">
    <property type="term" value="F:chlorophyll binding"/>
    <property type="evidence" value="ECO:0007669"/>
    <property type="project" value="UniProtKB-UniRule"/>
</dbReference>
<dbReference type="GO" id="GO:0045156">
    <property type="term" value="F:electron transporter, transferring electrons within the cyclic electron transport pathway of photosynthesis activity"/>
    <property type="evidence" value="ECO:0007669"/>
    <property type="project" value="InterPro"/>
</dbReference>
<dbReference type="GO" id="GO:0046872">
    <property type="term" value="F:metal ion binding"/>
    <property type="evidence" value="ECO:0007669"/>
    <property type="project" value="UniProtKB-KW"/>
</dbReference>
<dbReference type="GO" id="GO:0009772">
    <property type="term" value="P:photosynthetic electron transport in photosystem II"/>
    <property type="evidence" value="ECO:0007669"/>
    <property type="project" value="InterPro"/>
</dbReference>
<dbReference type="FunFam" id="1.10.10.670:FF:000001">
    <property type="entry name" value="Photosystem II CP43 reaction center protein"/>
    <property type="match status" value="1"/>
</dbReference>
<dbReference type="Gene3D" id="1.10.10.670">
    <property type="entry name" value="photosystem ii from thermosynechococcus elongatus"/>
    <property type="match status" value="1"/>
</dbReference>
<dbReference type="HAMAP" id="MF_01496">
    <property type="entry name" value="PSII_PsbC_CP43"/>
    <property type="match status" value="1"/>
</dbReference>
<dbReference type="InterPro" id="IPR000932">
    <property type="entry name" value="PS_antenna-like"/>
</dbReference>
<dbReference type="InterPro" id="IPR036001">
    <property type="entry name" value="PS_II_antenna-like_sf"/>
</dbReference>
<dbReference type="InterPro" id="IPR005869">
    <property type="entry name" value="PSII_PsbC"/>
</dbReference>
<dbReference type="InterPro" id="IPR044900">
    <property type="entry name" value="PSII_PsbC_sf"/>
</dbReference>
<dbReference type="NCBIfam" id="TIGR01153">
    <property type="entry name" value="psbC"/>
    <property type="match status" value="1"/>
</dbReference>
<dbReference type="Pfam" id="PF00421">
    <property type="entry name" value="PSII"/>
    <property type="match status" value="1"/>
</dbReference>
<dbReference type="SUPFAM" id="SSF161077">
    <property type="entry name" value="Photosystem II antenna protein-like"/>
    <property type="match status" value="1"/>
</dbReference>
<protein>
    <recommendedName>
        <fullName evidence="1">Photosystem II CP43 reaction center protein</fullName>
    </recommendedName>
    <alternativeName>
        <fullName evidence="1">PSII 43 kDa protein</fullName>
    </alternativeName>
    <alternativeName>
        <fullName evidence="1">Protein CP-43</fullName>
    </alternativeName>
</protein>
<proteinExistence type="inferred from homology"/>
<gene>
    <name evidence="1" type="primary">psbC</name>
</gene>
<keyword id="KW-0007">Acetylation</keyword>
<keyword id="KW-0148">Chlorophyll</keyword>
<keyword id="KW-0150">Chloroplast</keyword>
<keyword id="KW-0157">Chromophore</keyword>
<keyword id="KW-0464">Manganese</keyword>
<keyword id="KW-0472">Membrane</keyword>
<keyword id="KW-0479">Metal-binding</keyword>
<keyword id="KW-0597">Phosphoprotein</keyword>
<keyword id="KW-0602">Photosynthesis</keyword>
<keyword id="KW-0604">Photosystem II</keyword>
<keyword id="KW-0934">Plastid</keyword>
<keyword id="KW-0793">Thylakoid</keyword>
<keyword id="KW-0812">Transmembrane</keyword>
<keyword id="KW-1133">Transmembrane helix</keyword>
<evidence type="ECO:0000255" key="1">
    <source>
        <dbReference type="HAMAP-Rule" id="MF_01496"/>
    </source>
</evidence>
<sequence length="473" mass="51922">MKTLYSLRRFYHVETLFNGTLALAGRDQETTGFAWWAGNARLINLSGKLLGAHVAHAGLIVFWAGAMNLFEVAHFVPEKPMYEQGLILLPHLATLGWGVGPGGEVIDTFPYFVSGVLHLISSAVLGFGGIYHALLGPETLEESFPFFGYVWKDRNKMTTILGIHLILLGIGAFLLVFKALYFGGVYDTWAPGGGDVRKITNLTLSPSVIFGYLLKSPFGGEGWIVSVDDLEDIIGGHVWLGSICIFGGIWHILTKPFAWARRALVWSGEAYLSYSLGALSVFGFIACCFVWFNNTAYPSEFYGPTGPEASQAQAFTFLVRDQRLGANVGSAQGPTGLGKYLMRSPTGEVIFGGETMRFWDLRAPWLEPLRGPNGLDLSRLKKDIQPWQERRSAEYMTHAPLGSLNSVGGVATEINAVNYVSPRSWLATSHFVLGFFLFVGHLWHAGRARAAAAGFEKGIDRDLEPVLFMTPLN</sequence>
<feature type="propeptide" id="PRO_0000431119" evidence="1">
    <location>
        <begin position="1"/>
        <end position="14"/>
    </location>
</feature>
<feature type="chain" id="PRO_0000361335" description="Photosystem II CP43 reaction center protein" evidence="1">
    <location>
        <begin position="15"/>
        <end position="473"/>
    </location>
</feature>
<feature type="transmembrane region" description="Helical" evidence="1">
    <location>
        <begin position="69"/>
        <end position="93"/>
    </location>
</feature>
<feature type="transmembrane region" description="Helical" evidence="1">
    <location>
        <begin position="134"/>
        <end position="155"/>
    </location>
</feature>
<feature type="transmembrane region" description="Helical" evidence="1">
    <location>
        <begin position="178"/>
        <end position="200"/>
    </location>
</feature>
<feature type="transmembrane region" description="Helical" evidence="1">
    <location>
        <begin position="255"/>
        <end position="275"/>
    </location>
</feature>
<feature type="transmembrane region" description="Helical" evidence="1">
    <location>
        <begin position="291"/>
        <end position="312"/>
    </location>
</feature>
<feature type="transmembrane region" description="Helical" evidence="1">
    <location>
        <begin position="447"/>
        <end position="471"/>
    </location>
</feature>
<feature type="binding site" evidence="1">
    <location>
        <position position="367"/>
    </location>
    <ligand>
        <name>[CaMn4O5] cluster</name>
        <dbReference type="ChEBI" id="CHEBI:189552"/>
    </ligand>
</feature>
<feature type="modified residue" description="N-acetylthreonine" evidence="1">
    <location>
        <position position="15"/>
    </location>
</feature>
<feature type="modified residue" description="Phosphothreonine" evidence="1">
    <location>
        <position position="15"/>
    </location>
</feature>
<reference key="1">
    <citation type="journal article" date="2008" name="Nature">
        <title>The draft genome of the transgenic tropical fruit tree papaya (Carica papaya Linnaeus).</title>
        <authorList>
            <person name="Ming R."/>
            <person name="Hou S."/>
            <person name="Feng Y."/>
            <person name="Yu Q."/>
            <person name="Dionne-Laporte A."/>
            <person name="Saw J.H."/>
            <person name="Senin P."/>
            <person name="Wang W."/>
            <person name="Ly B.V."/>
            <person name="Lewis K.L."/>
            <person name="Salzberg S.L."/>
            <person name="Feng L."/>
            <person name="Jones M.R."/>
            <person name="Skelton R.L."/>
            <person name="Murray J.E."/>
            <person name="Chen C."/>
            <person name="Qian W."/>
            <person name="Shen J."/>
            <person name="Du P."/>
            <person name="Eustice M."/>
            <person name="Tong E."/>
            <person name="Tang H."/>
            <person name="Lyons E."/>
            <person name="Paull R.E."/>
            <person name="Michael T.P."/>
            <person name="Wall K."/>
            <person name="Rice D.W."/>
            <person name="Albert H."/>
            <person name="Wang M.L."/>
            <person name="Zhu Y.J."/>
            <person name="Schatz M."/>
            <person name="Nagarajan N."/>
            <person name="Acob R.A."/>
            <person name="Guan P."/>
            <person name="Blas A."/>
            <person name="Wai C.M."/>
            <person name="Ackerman C.M."/>
            <person name="Ren Y."/>
            <person name="Liu C."/>
            <person name="Wang J."/>
            <person name="Wang J."/>
            <person name="Na J.K."/>
            <person name="Shakirov E.V."/>
            <person name="Haas B."/>
            <person name="Thimmapuram J."/>
            <person name="Nelson D."/>
            <person name="Wang X."/>
            <person name="Bowers J.E."/>
            <person name="Gschwend A.R."/>
            <person name="Delcher A.L."/>
            <person name="Singh R."/>
            <person name="Suzuki J.Y."/>
            <person name="Tripathi S."/>
            <person name="Neupane K."/>
            <person name="Wei H."/>
            <person name="Irikura B."/>
            <person name="Paidi M."/>
            <person name="Jiang N."/>
            <person name="Zhang W."/>
            <person name="Presting G."/>
            <person name="Windsor A."/>
            <person name="Navajas-Perez R."/>
            <person name="Torres M.J."/>
            <person name="Feltus F.A."/>
            <person name="Porter B."/>
            <person name="Li Y."/>
            <person name="Burroughs A.M."/>
            <person name="Luo M.C."/>
            <person name="Liu L."/>
            <person name="Christopher D.A."/>
            <person name="Mount S.M."/>
            <person name="Moore P.H."/>
            <person name="Sugimura T."/>
            <person name="Jiang J."/>
            <person name="Schuler M.A."/>
            <person name="Friedman V."/>
            <person name="Mitchell-Olds T."/>
            <person name="Shippen D.E."/>
            <person name="dePamphilis C.W."/>
            <person name="Palmer J.D."/>
            <person name="Freeling M."/>
            <person name="Paterson A.H."/>
            <person name="Gonsalves D."/>
            <person name="Wang L."/>
            <person name="Alam M."/>
        </authorList>
    </citation>
    <scope>NUCLEOTIDE SEQUENCE [LARGE SCALE GENOMIC DNA]</scope>
    <source>
        <strain>cv. SunUp</strain>
    </source>
</reference>
<accession>B1A931</accession>
<geneLocation type="chloroplast"/>
<organism>
    <name type="scientific">Carica papaya</name>
    <name type="common">Papaya</name>
    <dbReference type="NCBI Taxonomy" id="3649"/>
    <lineage>
        <taxon>Eukaryota</taxon>
        <taxon>Viridiplantae</taxon>
        <taxon>Streptophyta</taxon>
        <taxon>Embryophyta</taxon>
        <taxon>Tracheophyta</taxon>
        <taxon>Spermatophyta</taxon>
        <taxon>Magnoliopsida</taxon>
        <taxon>eudicotyledons</taxon>
        <taxon>Gunneridae</taxon>
        <taxon>Pentapetalae</taxon>
        <taxon>rosids</taxon>
        <taxon>malvids</taxon>
        <taxon>Brassicales</taxon>
        <taxon>Caricaceae</taxon>
        <taxon>Carica</taxon>
    </lineage>
</organism>
<name>PSBC_CARPA</name>
<comment type="function">
    <text evidence="1">One of the components of the core complex of photosystem II (PSII). It binds chlorophyll and helps catalyze the primary light-induced photochemical processes of PSII. PSII is a light-driven water:plastoquinone oxidoreductase, using light energy to abstract electrons from H(2)O, generating O(2) and a proton gradient subsequently used for ATP formation.</text>
</comment>
<comment type="cofactor">
    <text evidence="1">Binds multiple chlorophylls and provides some of the ligands for the Ca-4Mn-5O cluster of the oxygen-evolving complex. It may also provide a ligand for a Cl- that is required for oxygen evolution. PSII binds additional chlorophylls, carotenoids and specific lipids.</text>
</comment>
<comment type="subunit">
    <text evidence="1">PSII is composed of 1 copy each of membrane proteins PsbA, PsbB, PsbC, PsbD, PsbE, PsbF, PsbH, PsbI, PsbJ, PsbK, PsbL, PsbM, PsbT, PsbX, PsbY, PsbZ, Psb30/Ycf12, at least 3 peripheral proteins of the oxygen-evolving complex and a large number of cofactors. It forms dimeric complexes.</text>
</comment>
<comment type="subcellular location">
    <subcellularLocation>
        <location evidence="1">Plastid</location>
        <location evidence="1">Chloroplast thylakoid membrane</location>
        <topology evidence="1">Multi-pass membrane protein</topology>
    </subcellularLocation>
</comment>
<comment type="similarity">
    <text evidence="1">Belongs to the PsbB/PsbC family. PsbC subfamily.</text>
</comment>